<feature type="chain" id="PRO_0000438848" description="Polygalacturonase" evidence="8">
    <location>
        <begin position="1" status="less than"/>
        <end position="164" status="greater than"/>
    </location>
</feature>
<feature type="non-consecutive residues" evidence="5">
    <location>
        <begin position="10"/>
        <end position="11"/>
    </location>
</feature>
<feature type="non-consecutive residues" evidence="5">
    <location>
        <begin position="23"/>
        <end position="24"/>
    </location>
</feature>
<feature type="non-consecutive residues" evidence="5">
    <location>
        <begin position="36"/>
        <end position="37"/>
    </location>
</feature>
<feature type="non-consecutive residues" evidence="5">
    <location>
        <begin position="43"/>
        <end position="44"/>
    </location>
</feature>
<feature type="non-consecutive residues" evidence="5">
    <location>
        <begin position="62"/>
        <end position="63"/>
    </location>
</feature>
<feature type="non-consecutive residues" evidence="5">
    <location>
        <begin position="90"/>
        <end position="91"/>
    </location>
</feature>
<feature type="non-consecutive residues" evidence="5">
    <location>
        <begin position="96"/>
        <end position="97"/>
    </location>
</feature>
<feature type="non-consecutive residues" evidence="5">
    <location>
        <begin position="138"/>
        <end position="139"/>
    </location>
</feature>
<feature type="non-consecutive residues" evidence="5">
    <location>
        <begin position="149"/>
        <end position="150"/>
    </location>
</feature>
<feature type="non-terminal residue" evidence="5">
    <location>
        <position position="1"/>
    </location>
</feature>
<feature type="non-terminal residue" evidence="5">
    <location>
        <position position="164"/>
    </location>
</feature>
<comment type="catalytic activity">
    <reaction evidence="1">
        <text>(1,4-alpha-D-galacturonosyl)n+m + H2O = (1,4-alpha-D-galacturonosyl)n + (1,4-alpha-D-galacturonosyl)m.</text>
        <dbReference type="EC" id="3.2.1.15"/>
    </reaction>
</comment>
<comment type="subcellular location">
    <subcellularLocation>
        <location evidence="1">Secreted</location>
        <location evidence="1">Cell wall</location>
    </subcellularLocation>
</comment>
<comment type="mass spectrometry" mass="56835.0" method="Electrospray" evidence="3"/>
<comment type="allergen">
    <text evidence="2 3 4">Causes an allergenic reaction in human. Binds to IgE.</text>
</comment>
<comment type="similarity">
    <text evidence="8">Belongs to the glycosyl hydrolase 28 family.</text>
</comment>
<keyword id="KW-0020">Allergen</keyword>
<keyword id="KW-0134">Cell wall</keyword>
<keyword id="KW-0961">Cell wall biogenesis/degradation</keyword>
<keyword id="KW-0903">Direct protein sequencing</keyword>
<keyword id="KW-0326">Glycosidase</keyword>
<keyword id="KW-0378">Hydrolase</keyword>
<keyword id="KW-0964">Secreted</keyword>
<dbReference type="EC" id="3.2.1.15" evidence="1"/>
<dbReference type="Allergome" id="10177">
    <property type="allergen name" value="Cup s 2"/>
</dbReference>
<dbReference type="Allergome" id="11995">
    <property type="allergen name" value="Cup s 2.0101"/>
</dbReference>
<dbReference type="GO" id="GO:0005576">
    <property type="term" value="C:extracellular region"/>
    <property type="evidence" value="ECO:0007669"/>
    <property type="project" value="UniProtKB-KW"/>
</dbReference>
<dbReference type="GO" id="GO:0004650">
    <property type="term" value="F:polygalacturonase activity"/>
    <property type="evidence" value="ECO:0007669"/>
    <property type="project" value="UniProtKB-EC"/>
</dbReference>
<dbReference type="GO" id="GO:0005975">
    <property type="term" value="P:carbohydrate metabolic process"/>
    <property type="evidence" value="ECO:0007669"/>
    <property type="project" value="InterPro"/>
</dbReference>
<dbReference type="GO" id="GO:0071555">
    <property type="term" value="P:cell wall organization"/>
    <property type="evidence" value="ECO:0007669"/>
    <property type="project" value="UniProtKB-KW"/>
</dbReference>
<dbReference type="Gene3D" id="2.160.20.10">
    <property type="entry name" value="Single-stranded right-handed beta-helix, Pectin lyase-like"/>
    <property type="match status" value="2"/>
</dbReference>
<dbReference type="InterPro" id="IPR000743">
    <property type="entry name" value="Glyco_hydro_28"/>
</dbReference>
<dbReference type="InterPro" id="IPR012334">
    <property type="entry name" value="Pectin_lyas_fold"/>
</dbReference>
<dbReference type="InterPro" id="IPR011050">
    <property type="entry name" value="Pectin_lyase_fold/virulence"/>
</dbReference>
<dbReference type="PANTHER" id="PTHR31375">
    <property type="match status" value="1"/>
</dbReference>
<dbReference type="Pfam" id="PF00295">
    <property type="entry name" value="Glyco_hydro_28"/>
    <property type="match status" value="1"/>
</dbReference>
<dbReference type="SUPFAM" id="SSF51126">
    <property type="entry name" value="Pectin lyase-like"/>
    <property type="match status" value="1"/>
</dbReference>
<dbReference type="PROSITE" id="PS00502">
    <property type="entry name" value="POLYGALACTURONASE"/>
    <property type="match status" value="1"/>
</dbReference>
<reference evidence="8" key="1">
    <citation type="journal article" date="2017" name="Allergy">
        <title>Identification of a polygalacturonase (Cup s 2) as the major CCD-bearing allergen in Cupressus sempervirens pollen.</title>
        <authorList>
            <person name="Shahali Y."/>
            <person name="Sutra J.P."/>
            <person name="Hilger C."/>
            <person name="Swiontek K."/>
            <person name="Haddad I."/>
            <person name="Vinh J."/>
            <person name="Guilloux L."/>
            <person name="Charpin D."/>
            <person name="Senechal H."/>
            <person name="Poncet P."/>
        </authorList>
    </citation>
    <scope>PROTEIN SEQUENCE OF 1-10</scope>
    <scope>ALLERGEN</scope>
    <scope>IDENTIFICATION BY MASS SPECTROMETRY</scope>
    <source>
        <tissue evidence="7">Pollen</tissue>
    </source>
</reference>
<reference evidence="8" key="2">
    <citation type="journal article" date="2012" name="Electrophoresis">
        <title>Proteomics of cypress pollen allergens using double and triple one-dimensional electrophoresis.</title>
        <authorList>
            <person name="Shahali Y."/>
            <person name="Sutra J.P."/>
            <person name="Haddad I."/>
            <person name="Vinh J."/>
            <person name="Guilloux L."/>
            <person name="Peltre G."/>
            <person name="Senechal H."/>
            <person name="Poncet P."/>
        </authorList>
    </citation>
    <scope>PROTEIN SEQUENCE OF 11-164</scope>
    <scope>ALLERGEN</scope>
    <scope>IDENTIFICATION BY MASS SPECTROMETRY</scope>
    <source>
        <tissue evidence="5">Pollen</tissue>
    </source>
</reference>
<reference evidence="8" key="3">
    <citation type="journal article" date="2012" name="J. Proteomics">
        <title>Allergomic study of cypress pollen via combinatorial peptide ligand libraries.</title>
        <authorList>
            <person name="Shahali Y."/>
            <person name="Sutra J.P."/>
            <person name="Fasoli E."/>
            <person name="D'Amato A."/>
            <person name="Righetti P.G."/>
            <person name="Futamura N."/>
            <person name="Boschetti E."/>
            <person name="Senechal H."/>
            <person name="Poncet P."/>
        </authorList>
    </citation>
    <scope>ALLERGEN</scope>
    <scope>MASS SPECTROMETRY</scope>
    <scope>IDENTIFICATION BY MASS SPECTROMETRY</scope>
    <source>
        <tissue evidence="6">Pollen</tissue>
    </source>
</reference>
<proteinExistence type="evidence at protein level"/>
<evidence type="ECO:0000250" key="1">
    <source>
        <dbReference type="UniProtKB" id="P05117"/>
    </source>
</evidence>
<evidence type="ECO:0000269" key="2">
    <source>
    </source>
</evidence>
<evidence type="ECO:0000269" key="3">
    <source>
    </source>
</evidence>
<evidence type="ECO:0000269" key="4">
    <source>
    </source>
</evidence>
<evidence type="ECO:0000303" key="5">
    <source>
    </source>
</evidence>
<evidence type="ECO:0000303" key="6">
    <source>
    </source>
</evidence>
<evidence type="ECO:0000303" key="7">
    <source>
    </source>
</evidence>
<evidence type="ECO:0000305" key="8"/>
<sequence length="164" mass="17996">DVAIVFNVEHTLSAVFLVPANKKVDGIIAAYPDPVKIWMHFARTVCNDKGRPTAIKIDFSKSELTLMNSPEFHLVFGECDGVKIQGIKIKRFEIEKDLTCGPGHGMSIGSLGKGNSRSEVSFVHLDGAKFIDTQNGLRSAVKIEDVTFKNANGYYTNPLNPPCK</sequence>
<accession>C0HKB1</accession>
<organism evidence="5">
    <name type="scientific">Cupressus sempervirens</name>
    <name type="common">Italian cypress</name>
    <dbReference type="NCBI Taxonomy" id="13469"/>
    <lineage>
        <taxon>Eukaryota</taxon>
        <taxon>Viridiplantae</taxon>
        <taxon>Streptophyta</taxon>
        <taxon>Embryophyta</taxon>
        <taxon>Tracheophyta</taxon>
        <taxon>Spermatophyta</taxon>
        <taxon>Pinopsida</taxon>
        <taxon>Pinidae</taxon>
        <taxon>Conifers II</taxon>
        <taxon>Cupressales</taxon>
        <taxon>Cupressaceae</taxon>
        <taxon>Cupressus</taxon>
    </lineage>
</organism>
<name>PGLR_CUPSE</name>
<protein>
    <recommendedName>
        <fullName evidence="7">Polygalacturonase</fullName>
        <ecNumber evidence="1">3.2.1.15</ecNumber>
    </recommendedName>
    <allergenName evidence="7">Cup s 2</allergenName>
</protein>